<dbReference type="EMBL" id="AB067469">
    <property type="protein sequence ID" value="BAB67775.1"/>
    <property type="status" value="ALT_INIT"/>
    <property type="molecule type" value="mRNA"/>
</dbReference>
<dbReference type="EMBL" id="AK027689">
    <property type="protein sequence ID" value="BAB55299.1"/>
    <property type="status" value="ALT_INIT"/>
    <property type="molecule type" value="mRNA"/>
</dbReference>
<dbReference type="EMBL" id="AK128755">
    <property type="protein sequence ID" value="BAC87600.1"/>
    <property type="molecule type" value="mRNA"/>
</dbReference>
<dbReference type="EMBL" id="BC003650">
    <property type="protein sequence ID" value="AAH03650.3"/>
    <property type="molecule type" value="mRNA"/>
</dbReference>
<dbReference type="EMBL" id="BC006206">
    <property type="protein sequence ID" value="AAH06206.3"/>
    <property type="status" value="ALT_INIT"/>
    <property type="molecule type" value="mRNA"/>
</dbReference>
<dbReference type="EMBL" id="BC065288">
    <property type="protein sequence ID" value="AAH65288.1"/>
    <property type="molecule type" value="mRNA"/>
</dbReference>
<dbReference type="EMBL" id="AL833973">
    <property type="protein sequence ID" value="CAH56384.1"/>
    <property type="molecule type" value="mRNA"/>
</dbReference>
<dbReference type="EMBL" id="AY190606">
    <property type="protein sequence ID" value="AAO38740.1"/>
    <property type="molecule type" value="mRNA"/>
</dbReference>
<dbReference type="EMBL" id="AY630619">
    <property type="protein sequence ID" value="AAV31908.1"/>
    <property type="molecule type" value="mRNA"/>
</dbReference>
<dbReference type="CCDS" id="CCDS55278.1">
    <molecule id="Q96Q05-1"/>
</dbReference>
<dbReference type="RefSeq" id="NP_001153844.1">
    <molecule id="Q96Q05-1"/>
    <property type="nucleotide sequence ID" value="NM_001160372.4"/>
</dbReference>
<dbReference type="RefSeq" id="NP_001308575.1">
    <molecule id="Q96Q05-3"/>
    <property type="nucleotide sequence ID" value="NM_001321646.2"/>
</dbReference>
<dbReference type="RefSeq" id="NP_113654.4">
    <molecule id="Q96Q05-1"/>
    <property type="nucleotide sequence ID" value="NM_031466.7"/>
</dbReference>
<dbReference type="BioGRID" id="123730">
    <property type="interactions" value="111"/>
</dbReference>
<dbReference type="ComplexPortal" id="CPX-4749">
    <property type="entry name" value="TRAPP II complex, TRAPPC2 variant"/>
</dbReference>
<dbReference type="ComplexPortal" id="CPX-6902">
    <property type="entry name" value="TRAPP II complex, TRAPPC2B variant"/>
</dbReference>
<dbReference type="CORUM" id="Q96Q05"/>
<dbReference type="FunCoup" id="Q96Q05">
    <property type="interactions" value="2246"/>
</dbReference>
<dbReference type="IntAct" id="Q96Q05">
    <property type="interactions" value="68"/>
</dbReference>
<dbReference type="MINT" id="Q96Q05"/>
<dbReference type="STRING" id="9606.ENSP00000373979"/>
<dbReference type="GlyGen" id="Q96Q05">
    <property type="glycosylation" value="1 site, 1 N-linked glycan (1 site)"/>
</dbReference>
<dbReference type="iPTMnet" id="Q96Q05"/>
<dbReference type="MetOSite" id="Q96Q05"/>
<dbReference type="PhosphoSitePlus" id="Q96Q05"/>
<dbReference type="BioMuta" id="TRAPPC9"/>
<dbReference type="DMDM" id="190359999"/>
<dbReference type="jPOST" id="Q96Q05"/>
<dbReference type="MassIVE" id="Q96Q05"/>
<dbReference type="PaxDb" id="9606-ENSP00000373979"/>
<dbReference type="PeptideAtlas" id="Q96Q05"/>
<dbReference type="ProteomicsDB" id="77800">
    <molecule id="Q96Q05-1"/>
</dbReference>
<dbReference type="ProteomicsDB" id="77801">
    <molecule id="Q96Q05-2"/>
</dbReference>
<dbReference type="ProteomicsDB" id="77802">
    <molecule id="Q96Q05-3"/>
</dbReference>
<dbReference type="Pumba" id="Q96Q05"/>
<dbReference type="Antibodypedia" id="14382">
    <property type="antibodies" value="120 antibodies from 20 providers"/>
</dbReference>
<dbReference type="DNASU" id="83696"/>
<dbReference type="Ensembl" id="ENST00000438773.4">
    <molecule id="Q96Q05-1"/>
    <property type="protein sequence ID" value="ENSP00000405060.3"/>
    <property type="gene ID" value="ENSG00000167632.18"/>
</dbReference>
<dbReference type="Ensembl" id="ENST00000648948.2">
    <molecule id="Q96Q05-1"/>
    <property type="protein sequence ID" value="ENSP00000498020.1"/>
    <property type="gene ID" value="ENSG00000167632.18"/>
</dbReference>
<dbReference type="GeneID" id="83696"/>
<dbReference type="KEGG" id="hsa:83696"/>
<dbReference type="MANE-Select" id="ENST00000438773.4">
    <property type="protein sequence ID" value="ENSP00000405060.3"/>
    <property type="RefSeq nucleotide sequence ID" value="NM_001160372.4"/>
    <property type="RefSeq protein sequence ID" value="NP_001153844.1"/>
</dbReference>
<dbReference type="UCSC" id="uc003yvh.2">
    <molecule id="Q96Q05-1"/>
    <property type="organism name" value="human"/>
</dbReference>
<dbReference type="AGR" id="HGNC:30832"/>
<dbReference type="CTD" id="83696"/>
<dbReference type="DisGeNET" id="83696"/>
<dbReference type="GeneCards" id="TRAPPC9"/>
<dbReference type="HGNC" id="HGNC:30832">
    <property type="gene designation" value="TRAPPC9"/>
</dbReference>
<dbReference type="HPA" id="ENSG00000167632">
    <property type="expression patterns" value="Low tissue specificity"/>
</dbReference>
<dbReference type="MalaCards" id="TRAPPC9"/>
<dbReference type="MIM" id="611966">
    <property type="type" value="gene"/>
</dbReference>
<dbReference type="MIM" id="613192">
    <property type="type" value="phenotype"/>
</dbReference>
<dbReference type="neXtProt" id="NX_Q96Q05"/>
<dbReference type="OpenTargets" id="ENSG00000167632"/>
<dbReference type="Orphanet" id="88616">
    <property type="disease" value="Autosomal recessive non-syndromic intellectual disability"/>
</dbReference>
<dbReference type="Orphanet" id="352530">
    <property type="disease" value="Intellectual disability-obesity-brain malformations-facial dysmorphism syndrome"/>
</dbReference>
<dbReference type="PharmGKB" id="PA162406921"/>
<dbReference type="VEuPathDB" id="HostDB:ENSG00000167632"/>
<dbReference type="eggNOG" id="KOG1953">
    <property type="taxonomic scope" value="Eukaryota"/>
</dbReference>
<dbReference type="GeneTree" id="ENSGT00390000006486"/>
<dbReference type="InParanoid" id="Q96Q05"/>
<dbReference type="OMA" id="HHSCLLV"/>
<dbReference type="OrthoDB" id="27962at2759"/>
<dbReference type="PAN-GO" id="Q96Q05">
    <property type="GO annotations" value="1 GO annotation based on evolutionary models"/>
</dbReference>
<dbReference type="PhylomeDB" id="Q96Q05"/>
<dbReference type="TreeFam" id="TF314341"/>
<dbReference type="PathwayCommons" id="Q96Q05"/>
<dbReference type="Reactome" id="R-HSA-204005">
    <property type="pathway name" value="COPII-mediated vesicle transport"/>
</dbReference>
<dbReference type="Reactome" id="R-HSA-8876198">
    <property type="pathway name" value="RAB GEFs exchange GTP for GDP on RABs"/>
</dbReference>
<dbReference type="SignaLink" id="Q96Q05"/>
<dbReference type="SIGNOR" id="Q96Q05"/>
<dbReference type="BioGRID-ORCS" id="83696">
    <property type="hits" value="17 hits in 1156 CRISPR screens"/>
</dbReference>
<dbReference type="CD-CODE" id="FB4E32DD">
    <property type="entry name" value="Presynaptic clusters and postsynaptic densities"/>
</dbReference>
<dbReference type="ChiTaRS" id="TRAPPC9">
    <property type="organism name" value="human"/>
</dbReference>
<dbReference type="GenomeRNAi" id="83696"/>
<dbReference type="Pharos" id="Q96Q05">
    <property type="development level" value="Tbio"/>
</dbReference>
<dbReference type="PRO" id="PR:Q96Q05"/>
<dbReference type="Proteomes" id="UP000005640">
    <property type="component" value="Chromosome 8"/>
</dbReference>
<dbReference type="RNAct" id="Q96Q05">
    <property type="molecule type" value="protein"/>
</dbReference>
<dbReference type="Bgee" id="ENSG00000167632">
    <property type="expression patterns" value="Expressed in hindlimb stylopod muscle and 180 other cell types or tissues"/>
</dbReference>
<dbReference type="ExpressionAtlas" id="Q96Q05">
    <property type="expression patterns" value="baseline and differential"/>
</dbReference>
<dbReference type="GO" id="GO:0005737">
    <property type="term" value="C:cytoplasm"/>
    <property type="evidence" value="ECO:0000303"/>
    <property type="project" value="ComplexPortal"/>
</dbReference>
<dbReference type="GO" id="GO:0005829">
    <property type="term" value="C:cytosol"/>
    <property type="evidence" value="ECO:0000304"/>
    <property type="project" value="Reactome"/>
</dbReference>
<dbReference type="GO" id="GO:0005783">
    <property type="term" value="C:endoplasmic reticulum"/>
    <property type="evidence" value="ECO:0007669"/>
    <property type="project" value="UniProtKB-SubCell"/>
</dbReference>
<dbReference type="GO" id="GO:0005802">
    <property type="term" value="C:trans-Golgi network"/>
    <property type="evidence" value="ECO:0000318"/>
    <property type="project" value="GO_Central"/>
</dbReference>
<dbReference type="GO" id="GO:0030008">
    <property type="term" value="C:TRAPP complex"/>
    <property type="evidence" value="ECO:0000314"/>
    <property type="project" value="UniProtKB"/>
</dbReference>
<dbReference type="GO" id="GO:1990071">
    <property type="term" value="C:TRAPPII protein complex"/>
    <property type="evidence" value="ECO:0000303"/>
    <property type="project" value="ComplexPortal"/>
</dbReference>
<dbReference type="GO" id="GO:0021987">
    <property type="term" value="P:cerebral cortex development"/>
    <property type="evidence" value="ECO:0000315"/>
    <property type="project" value="GO_Central"/>
</dbReference>
<dbReference type="GO" id="GO:0006888">
    <property type="term" value="P:endoplasmic reticulum to Golgi vesicle-mediated transport"/>
    <property type="evidence" value="ECO:0000303"/>
    <property type="project" value="ComplexPortal"/>
</dbReference>
<dbReference type="GO" id="GO:0030182">
    <property type="term" value="P:neuron differentiation"/>
    <property type="evidence" value="ECO:0007669"/>
    <property type="project" value="Ensembl"/>
</dbReference>
<dbReference type="GO" id="GO:0006901">
    <property type="term" value="P:vesicle coating"/>
    <property type="evidence" value="ECO:0000303"/>
    <property type="project" value="ComplexPortal"/>
</dbReference>
<dbReference type="GO" id="GO:0099022">
    <property type="term" value="P:vesicle tethering"/>
    <property type="evidence" value="ECO:0000303"/>
    <property type="project" value="ComplexPortal"/>
</dbReference>
<dbReference type="InterPro" id="IPR013935">
    <property type="entry name" value="TRAPP_II_complex_Trs120"/>
</dbReference>
<dbReference type="PANTHER" id="PTHR21512">
    <property type="entry name" value="TRAFFICKING PROTEIN PARTICLE COMPLEX SUBUNIT 9"/>
    <property type="match status" value="1"/>
</dbReference>
<dbReference type="PANTHER" id="PTHR21512:SF5">
    <property type="entry name" value="TRAFFICKING PROTEIN PARTICLE COMPLEX SUBUNIT 9"/>
    <property type="match status" value="1"/>
</dbReference>
<dbReference type="Pfam" id="PF08626">
    <property type="entry name" value="TRAPPC9-Trs120"/>
    <property type="match status" value="2"/>
</dbReference>
<protein>
    <recommendedName>
        <fullName>Trafficking protein particle complex subunit 9</fullName>
    </recommendedName>
    <alternativeName>
        <fullName>NIK- and IKBKB-binding protein</fullName>
    </alternativeName>
    <alternativeName>
        <fullName>Tularik gene 1 protein</fullName>
    </alternativeName>
</protein>
<reference key="1">
    <citation type="journal article" date="2001" name="DNA Res.">
        <title>Prediction of the coding sequences of unidentified human genes. XXI. The complete sequences of 60 new cDNA clones from brain which code for large proteins.</title>
        <authorList>
            <person name="Nagase T."/>
            <person name="Kikuno R."/>
            <person name="Ohara O."/>
        </authorList>
    </citation>
    <scope>NUCLEOTIDE SEQUENCE [LARGE SCALE MRNA] (ISOFORM 1)</scope>
    <source>
        <tissue>Brain</tissue>
    </source>
</reference>
<reference key="2">
    <citation type="journal article" date="2004" name="Nat. Genet.">
        <title>Complete sequencing and characterization of 21,243 full-length human cDNAs.</title>
        <authorList>
            <person name="Ota T."/>
            <person name="Suzuki Y."/>
            <person name="Nishikawa T."/>
            <person name="Otsuki T."/>
            <person name="Sugiyama T."/>
            <person name="Irie R."/>
            <person name="Wakamatsu A."/>
            <person name="Hayashi K."/>
            <person name="Sato H."/>
            <person name="Nagai K."/>
            <person name="Kimura K."/>
            <person name="Makita H."/>
            <person name="Sekine M."/>
            <person name="Obayashi M."/>
            <person name="Nishi T."/>
            <person name="Shibahara T."/>
            <person name="Tanaka T."/>
            <person name="Ishii S."/>
            <person name="Yamamoto J."/>
            <person name="Saito K."/>
            <person name="Kawai Y."/>
            <person name="Isono Y."/>
            <person name="Nakamura Y."/>
            <person name="Nagahari K."/>
            <person name="Murakami K."/>
            <person name="Yasuda T."/>
            <person name="Iwayanagi T."/>
            <person name="Wagatsuma M."/>
            <person name="Shiratori A."/>
            <person name="Sudo H."/>
            <person name="Hosoiri T."/>
            <person name="Kaku Y."/>
            <person name="Kodaira H."/>
            <person name="Kondo H."/>
            <person name="Sugawara M."/>
            <person name="Takahashi M."/>
            <person name="Kanda K."/>
            <person name="Yokoi T."/>
            <person name="Furuya T."/>
            <person name="Kikkawa E."/>
            <person name="Omura Y."/>
            <person name="Abe K."/>
            <person name="Kamihara K."/>
            <person name="Katsuta N."/>
            <person name="Sato K."/>
            <person name="Tanikawa M."/>
            <person name="Yamazaki M."/>
            <person name="Ninomiya K."/>
            <person name="Ishibashi T."/>
            <person name="Yamashita H."/>
            <person name="Murakawa K."/>
            <person name="Fujimori K."/>
            <person name="Tanai H."/>
            <person name="Kimata M."/>
            <person name="Watanabe M."/>
            <person name="Hiraoka S."/>
            <person name="Chiba Y."/>
            <person name="Ishida S."/>
            <person name="Ono Y."/>
            <person name="Takiguchi S."/>
            <person name="Watanabe S."/>
            <person name="Yosida M."/>
            <person name="Hotuta T."/>
            <person name="Kusano J."/>
            <person name="Kanehori K."/>
            <person name="Takahashi-Fujii A."/>
            <person name="Hara H."/>
            <person name="Tanase T.-O."/>
            <person name="Nomura Y."/>
            <person name="Togiya S."/>
            <person name="Komai F."/>
            <person name="Hara R."/>
            <person name="Takeuchi K."/>
            <person name="Arita M."/>
            <person name="Imose N."/>
            <person name="Musashino K."/>
            <person name="Yuuki H."/>
            <person name="Oshima A."/>
            <person name="Sasaki N."/>
            <person name="Aotsuka S."/>
            <person name="Yoshikawa Y."/>
            <person name="Matsunawa H."/>
            <person name="Ichihara T."/>
            <person name="Shiohata N."/>
            <person name="Sano S."/>
            <person name="Moriya S."/>
            <person name="Momiyama H."/>
            <person name="Satoh N."/>
            <person name="Takami S."/>
            <person name="Terashima Y."/>
            <person name="Suzuki O."/>
            <person name="Nakagawa S."/>
            <person name="Senoh A."/>
            <person name="Mizoguchi H."/>
            <person name="Goto Y."/>
            <person name="Shimizu F."/>
            <person name="Wakebe H."/>
            <person name="Hishigaki H."/>
            <person name="Watanabe T."/>
            <person name="Sugiyama A."/>
            <person name="Takemoto M."/>
            <person name="Kawakami B."/>
            <person name="Yamazaki M."/>
            <person name="Watanabe K."/>
            <person name="Kumagai A."/>
            <person name="Itakura S."/>
            <person name="Fukuzumi Y."/>
            <person name="Fujimori Y."/>
            <person name="Komiyama M."/>
            <person name="Tashiro H."/>
            <person name="Tanigami A."/>
            <person name="Fujiwara T."/>
            <person name="Ono T."/>
            <person name="Yamada K."/>
            <person name="Fujii Y."/>
            <person name="Ozaki K."/>
            <person name="Hirao M."/>
            <person name="Ohmori Y."/>
            <person name="Kawabata A."/>
            <person name="Hikiji T."/>
            <person name="Kobatake N."/>
            <person name="Inagaki H."/>
            <person name="Ikema Y."/>
            <person name="Okamoto S."/>
            <person name="Okitani R."/>
            <person name="Kawakami T."/>
            <person name="Noguchi S."/>
            <person name="Itoh T."/>
            <person name="Shigeta K."/>
            <person name="Senba T."/>
            <person name="Matsumura K."/>
            <person name="Nakajima Y."/>
            <person name="Mizuno T."/>
            <person name="Morinaga M."/>
            <person name="Sasaki M."/>
            <person name="Togashi T."/>
            <person name="Oyama M."/>
            <person name="Hata H."/>
            <person name="Watanabe M."/>
            <person name="Komatsu T."/>
            <person name="Mizushima-Sugano J."/>
            <person name="Satoh T."/>
            <person name="Shirai Y."/>
            <person name="Takahashi Y."/>
            <person name="Nakagawa K."/>
            <person name="Okumura K."/>
            <person name="Nagase T."/>
            <person name="Nomura N."/>
            <person name="Kikuchi H."/>
            <person name="Masuho Y."/>
            <person name="Yamashita R."/>
            <person name="Nakai K."/>
            <person name="Yada T."/>
            <person name="Nakamura Y."/>
            <person name="Ohara O."/>
            <person name="Isogai T."/>
            <person name="Sugano S."/>
        </authorList>
    </citation>
    <scope>NUCLEOTIDE SEQUENCE [LARGE SCALE MRNA] (ISOFORM 2)</scope>
    <source>
        <tissue>Cerebellum</tissue>
        <tissue>Teratocarcinoma</tissue>
    </source>
</reference>
<reference key="3">
    <citation type="journal article" date="2004" name="Genome Res.">
        <title>The status, quality, and expansion of the NIH full-length cDNA project: the Mammalian Gene Collection (MGC).</title>
        <authorList>
            <consortium name="The MGC Project Team"/>
        </authorList>
    </citation>
    <scope>NUCLEOTIDE SEQUENCE [LARGE SCALE MRNA] OF 149-1148 (ISOFORM 3)</scope>
    <source>
        <tissue>Lung</tissue>
        <tissue>Skin</tissue>
    </source>
</reference>
<reference key="4">
    <citation type="journal article" date="2007" name="BMC Genomics">
        <title>The full-ORF clone resource of the German cDNA consortium.</title>
        <authorList>
            <person name="Bechtel S."/>
            <person name="Rosenfelder H."/>
            <person name="Duda A."/>
            <person name="Schmidt C.P."/>
            <person name="Ernst U."/>
            <person name="Wellenreuther R."/>
            <person name="Mehrle A."/>
            <person name="Schuster C."/>
            <person name="Bahr A."/>
            <person name="Bloecker H."/>
            <person name="Heubner D."/>
            <person name="Hoerlein A."/>
            <person name="Michel G."/>
            <person name="Wedler H."/>
            <person name="Koehrer K."/>
            <person name="Ottenwaelder B."/>
            <person name="Poustka A."/>
            <person name="Wiemann S."/>
            <person name="Schupp I."/>
        </authorList>
    </citation>
    <scope>NUCLEOTIDE SEQUENCE [LARGE SCALE MRNA] OF 198-1148 (ISOFORM 1)</scope>
    <source>
        <tissue>Uterus</tissue>
    </source>
</reference>
<reference key="5">
    <citation type="journal article" date="2003" name="Cancer Cell">
        <title>Genomic amplification and oncogenic properties of the KCNK9 potassium channel gene.</title>
        <authorList>
            <person name="Mu D."/>
            <person name="Chen L."/>
            <person name="Zhang X."/>
            <person name="See L.-H."/>
            <person name="Koch C.M."/>
            <person name="Yen C."/>
            <person name="Tong J.J."/>
            <person name="Spiegel L."/>
            <person name="Nguyen K.C.Q."/>
            <person name="Servoss A."/>
            <person name="Peng Y."/>
            <person name="Pei L."/>
            <person name="Marks J.R."/>
            <person name="Lowe S."/>
            <person name="Hoey T."/>
            <person name="Jan L.Y."/>
            <person name="McCombie W.R."/>
            <person name="Wigler M.H."/>
            <person name="Powers S."/>
        </authorList>
    </citation>
    <scope>NUCLEOTIDE SEQUENCE [MRNA] OF 205-1148 (ISOFORM 1)</scope>
</reference>
<reference key="6">
    <citation type="journal article" date="2005" name="J. Biol. Chem.">
        <title>NIBP, a novel NIK and IKK(beta)-binding protein that enhances NF-(kappa)B activation.</title>
        <authorList>
            <person name="Hu W.-H."/>
            <person name="Pendergast J.S."/>
            <person name="Mo X.-M."/>
            <person name="Brambilla R."/>
            <person name="Bracchi-Ricard V."/>
            <person name="Li F."/>
            <person name="Walters W.M."/>
            <person name="Blits B."/>
            <person name="He L."/>
            <person name="Schaal S.M."/>
            <person name="Bethea J.R."/>
        </authorList>
    </citation>
    <scope>NUCLEOTIDE SEQUENCE [MRNA] OF 938-1148 (ISOFORM 1)</scope>
    <scope>FUNCTION</scope>
    <scope>INTERACTION WITH IKBKB AND MAP3K14</scope>
    <scope>TISSUE SPECIFICITY</scope>
    <source>
        <tissue>Brain</tissue>
    </source>
</reference>
<reference key="7">
    <citation type="journal article" date="2008" name="Proc. Natl. Acad. Sci. U.S.A.">
        <title>A quantitative atlas of mitotic phosphorylation.</title>
        <authorList>
            <person name="Dephoure N."/>
            <person name="Zhou C."/>
            <person name="Villen J."/>
            <person name="Beausoleil S.A."/>
            <person name="Bakalarski C.E."/>
            <person name="Elledge S.J."/>
            <person name="Gygi S.P."/>
        </authorList>
    </citation>
    <scope>IDENTIFICATION BY MASS SPECTROMETRY [LARGE SCALE ANALYSIS]</scope>
    <source>
        <tissue>Cervix carcinoma</tissue>
    </source>
</reference>
<reference key="8">
    <citation type="journal article" date="2009" name="Am. J. Hum. Genet.">
        <title>A truncating mutation of TRAPPC9 is associated with autosomal-recessive intellectual disability and postnatal microcephaly.</title>
        <authorList>
            <person name="Mochida G.H."/>
            <person name="Mahajnah M."/>
            <person name="Hill A.D."/>
            <person name="Basel-Vanagaite L."/>
            <person name="Gleason D."/>
            <person name="Hill R.S."/>
            <person name="Bodell A."/>
            <person name="Crosier M."/>
            <person name="Straussberg R."/>
            <person name="Walsh C.A."/>
        </authorList>
    </citation>
    <scope>INVOLVEMENT IN MRT13</scope>
</reference>
<reference key="9">
    <citation type="journal article" date="2009" name="Am. J. Hum. Genet.">
        <title>Identification of mutations in TRAPPC9, which encodes the NIK- and IKK-beta-binding protein, in nonsyndromic autosomal-recessive mental retardation.</title>
        <authorList>
            <person name="Mir A."/>
            <person name="Kaufman L."/>
            <person name="Noor A."/>
            <person name="Motazacker M.M."/>
            <person name="Jamil T."/>
            <person name="Azam M."/>
            <person name="Kahrizi K."/>
            <person name="Rafiq M.A."/>
            <person name="Weksberg R."/>
            <person name="Nasr T."/>
            <person name="Naeem F."/>
            <person name="Tzschach A."/>
            <person name="Kuss A.W."/>
            <person name="Ishak G.E."/>
            <person name="Doherty D."/>
            <person name="Ropers H.H."/>
            <person name="Barkovich A.J."/>
            <person name="Najmabadi H."/>
            <person name="Ayub M."/>
            <person name="Vincent J.B."/>
        </authorList>
    </citation>
    <scope>INVOLVEMENT IN MRT13</scope>
</reference>
<reference key="10">
    <citation type="journal article" date="2009" name="Anal. Chem.">
        <title>Lys-N and trypsin cover complementary parts of the phosphoproteome in a refined SCX-based approach.</title>
        <authorList>
            <person name="Gauci S."/>
            <person name="Helbig A.O."/>
            <person name="Slijper M."/>
            <person name="Krijgsveld J."/>
            <person name="Heck A.J."/>
            <person name="Mohammed S."/>
        </authorList>
    </citation>
    <scope>IDENTIFICATION BY MASS SPECTROMETRY [LARGE SCALE ANALYSIS]</scope>
</reference>
<reference key="11">
    <citation type="journal article" date="2010" name="Sci. Signal.">
        <title>Quantitative phosphoproteomics reveals widespread full phosphorylation site occupancy during mitosis.</title>
        <authorList>
            <person name="Olsen J.V."/>
            <person name="Vermeulen M."/>
            <person name="Santamaria A."/>
            <person name="Kumar C."/>
            <person name="Miller M.L."/>
            <person name="Jensen L.J."/>
            <person name="Gnad F."/>
            <person name="Cox J."/>
            <person name="Jensen T.S."/>
            <person name="Nigg E.A."/>
            <person name="Brunak S."/>
            <person name="Mann M."/>
        </authorList>
    </citation>
    <scope>IDENTIFICATION BY MASS SPECTROMETRY [LARGE SCALE ANALYSIS]</scope>
    <source>
        <tissue>Cervix carcinoma</tissue>
    </source>
</reference>
<reference key="12">
    <citation type="journal article" date="2011" name="Mol. Biol. Cell">
        <title>C4orf41 and TTC-15 are mammalian TRAPP components with a role at an early stage in ER-to-Golgi trafficking.</title>
        <authorList>
            <person name="Scrivens P.J."/>
            <person name="Noueihed B."/>
            <person name="Shahrzad N."/>
            <person name="Hul S."/>
            <person name="Brunet S."/>
            <person name="Sacher M."/>
        </authorList>
    </citation>
    <scope>IDENTIFICATION IN TRAPP COMPLEX</scope>
</reference>
<reference key="13">
    <citation type="journal article" date="2013" name="J. Proteome Res.">
        <title>Toward a comprehensive characterization of a human cancer cell phosphoproteome.</title>
        <authorList>
            <person name="Zhou H."/>
            <person name="Di Palma S."/>
            <person name="Preisinger C."/>
            <person name="Peng M."/>
            <person name="Polat A.N."/>
            <person name="Heck A.J."/>
            <person name="Mohammed S."/>
        </authorList>
    </citation>
    <scope>PHOSPHORYLATION [LARGE SCALE ANALYSIS] AT SER-566 AND SER-953</scope>
    <scope>IDENTIFICATION BY MASS SPECTROMETRY [LARGE SCALE ANALYSIS]</scope>
    <source>
        <tissue>Cervix carcinoma</tissue>
        <tissue>Erythroleukemia</tissue>
    </source>
</reference>
<comment type="function">
    <text evidence="2">Functions as an activator of NF-kappa-B through increased phosphorylation of the IKK complex. May function in neuronal cells differentiation. May play a role in vesicular transport from endoplasmic reticulum to Golgi.</text>
</comment>
<comment type="subunit">
    <text evidence="2 5">Component of the multisubunit TRAPP (transport protein particle) complex, which includes at least TRAPPC2, TRAPPC2L, TRAPPC3, TRAPPC3L, TRAPPC4, TRAPPC5, TRAPPC8, TRAPPC9, TRAPPC10, TRAPPC11 and TRAPPC12. Directly interacts with IKBKB and MAP3K14.</text>
</comment>
<comment type="interaction">
    <interactant intactId="EBI-6160596">
        <id>Q96Q05</id>
    </interactant>
    <interactant intactId="EBI-10181525">
        <id>Q6ZNE9</id>
        <label>RUFY4</label>
    </interactant>
    <organismsDiffer>false</organismsDiffer>
    <experiments>2</experiments>
</comment>
<comment type="interaction">
    <interactant intactId="EBI-6160596">
        <id>Q96Q05</id>
    </interactant>
    <interactant intactId="EBI-1172267">
        <id>Q9CQP2</id>
        <label>Trappc2</label>
    </interactant>
    <organismsDiffer>true</organismsDiffer>
    <experiments>2</experiments>
</comment>
<comment type="subcellular location">
    <subcellularLocation>
        <location evidence="1">Golgi apparatus</location>
        <location evidence="1">cis-Golgi network</location>
    </subcellularLocation>
    <subcellularLocation>
        <location evidence="1">Endoplasmic reticulum</location>
    </subcellularLocation>
    <subcellularLocation>
        <location evidence="1">Cytoplasm</location>
    </subcellularLocation>
    <text evidence="1">Processes and cell bodies of neurons.</text>
</comment>
<comment type="alternative products">
    <event type="alternative splicing"/>
    <isoform>
        <id>Q96Q05-1</id>
        <name>1</name>
        <sequence type="displayed"/>
    </isoform>
    <isoform>
        <id>Q96Q05-2</id>
        <name>2</name>
        <sequence type="described" ref="VSP_034349"/>
    </isoform>
    <isoform>
        <id>Q96Q05-3</id>
        <name>3</name>
        <sequence type="described" ref="VSP_034350"/>
    </isoform>
</comment>
<comment type="tissue specificity">
    <text evidence="2">Expressed at high levels in muscle and kidney and to a lower extent in brain, heart and placenta.</text>
</comment>
<comment type="disease" evidence="3 4">
    <disease id="DI-02585">
        <name>Intellectual developmental disorder, autosomal recessive 13</name>
        <acronym>MRT13</acronym>
        <description>A disorder characterized by significantly below average general intellectual functioning associated with impairments in adaptive behavior and manifested during the developmental period. Brain magnetic resonance imaging of MRT13 patients indicates the presence of mild cerebral white matter hypoplasia. Microcephaly is present in some but not all affected individuals.</description>
        <dbReference type="MIM" id="613192"/>
    </disease>
    <text>The disease is caused by variants affecting the gene represented in this entry.</text>
</comment>
<comment type="similarity">
    <text evidence="8">Belongs to the NIBP family.</text>
</comment>
<comment type="sequence caution" evidence="8">
    <conflict type="erroneous initiation">
        <sequence resource="EMBL-CDS" id="AAH06206"/>
    </conflict>
</comment>
<comment type="sequence caution" evidence="8">
    <conflict type="erroneous initiation">
        <sequence resource="EMBL-CDS" id="BAB55299"/>
    </conflict>
</comment>
<comment type="sequence caution" evidence="8">
    <conflict type="erroneous initiation">
        <sequence resource="EMBL-CDS" id="BAB67775"/>
    </conflict>
</comment>
<name>TPPC9_HUMAN</name>
<accession>Q96Q05</accession>
<accession>Q4VTT3</accession>
<accession>Q658K7</accession>
<accession>Q6P149</accession>
<accession>Q6ZQT3</accession>
<accession>Q7L5C4</accession>
<accession>Q86Y21</accession>
<accession>Q96SL2</accession>
<accession>Q9BQA2</accession>
<keyword id="KW-0025">Alternative splicing</keyword>
<keyword id="KW-0963">Cytoplasm</keyword>
<keyword id="KW-0221">Differentiation</keyword>
<keyword id="KW-0256">Endoplasmic reticulum</keyword>
<keyword id="KW-0333">Golgi apparatus</keyword>
<keyword id="KW-0991">Intellectual disability</keyword>
<keyword id="KW-0597">Phosphoprotein</keyword>
<keyword id="KW-1267">Proteomics identification</keyword>
<keyword id="KW-1185">Reference proteome</keyword>
<gene>
    <name type="primary">TRAPPC9</name>
    <name type="synonym">KIAA1882</name>
    <name type="synonym">NIBP</name>
    <name type="ORF">T1</name>
</gene>
<sequence length="1148" mass="128530">MSVPDYMQCAEDHQTLLVVVQPVGIVSEENFFRIYKRICSVSQISVRDSQRVLYIRYRHHYPPENNEWGDFQTHRKVVGLITITDCFSAKDWPQTFEKFHVQKEIYGSTLYDSRLFVFGLQGEIVEQPRTDVAFYPNYEDCQTVEKRIEDFIESLFIVLESKRLDRATDKSGDKIPLLCVPFEKKDFVGLDTDSRHYKKRCQGRMRKHVGDLCLQAGMLQDSLVHYHMSVELLRSVNDFLWLGAALEGLCSASVIYHYPGGTGGKSGARRFQGSTLPAEAANRHRPGAQEVLIDPGALTTNGINPDTSTEIGRAKNCLSPEDIIDKYKEAISYYSKYKNAGVIELEACIKAVRVLAIQKRSMEASEFLQNAVYINLRQLSEEEKIQRYSILSELYELIGFHRKSAFFKRVAAMQCVAPSIAEPGWRACYKLLLETLPGYSLSLDPKDFSRGTHRGWAAVQMRLLHELVYASRRMGNPALSVRHLSFLLQTMLDFLSDQEKKDVAQSLENYTSKCPGTMEPIALPGGLTLPPVPFTKLPIVRHVKLLNLPASLRPHKMKSLLGQNVSTKSPFIYSPIIAHNRGEERNKKIDFQWVQGDVCEVQLMVYNPMPFELRVENMGLLTSGVEFESLPAALSLPAESGLYPVTLVGVPQTTGTITVNGYHTTVFGVFSDCLLDNLPGIKTSGSTVEVIPALPRLQISTSLPRSAHSLQPSSGDEISTNVSVQLYNGESQQLIIKLENIGMEPLEKLEVTSKVLTTKEKLYGDFLSWKLEETLAQFPLQPGKVATFTINIKVKLDFSCQENLLQDLSDDGISVSGFPLSSPFRQVVRPRVEGKPVNPPESNKAGDYSHVKTLEAVLNFKYSGGPGHTEGYYRNLSLGLHVEVEPSVFFTRVSTLPATSTRQCHLLLDVFNSTEHELTVSTRSSEALILHAGECQRMAIQVDKFNFESFPESPGEKGQFANPKQLEEERREARGLEIHSKLGICWRIPSLKRSGEASVEGLLNQLVLEHLQLAPLQWDVLVDGQPCDREAVAACQVGDPVRLEVRLTNRSPRSVGPFALTVVPFQDHQNGVHNYDLHDTVSFVGSSTFYLDAVQPSGQSACLGALLFLYTGDFFLHIRFHEDSTSKELPPSWFCLPSVHVCALEAQA</sequence>
<organism>
    <name type="scientific">Homo sapiens</name>
    <name type="common">Human</name>
    <dbReference type="NCBI Taxonomy" id="9606"/>
    <lineage>
        <taxon>Eukaryota</taxon>
        <taxon>Metazoa</taxon>
        <taxon>Chordata</taxon>
        <taxon>Craniata</taxon>
        <taxon>Vertebrata</taxon>
        <taxon>Euteleostomi</taxon>
        <taxon>Mammalia</taxon>
        <taxon>Eutheria</taxon>
        <taxon>Euarchontoglires</taxon>
        <taxon>Primates</taxon>
        <taxon>Haplorrhini</taxon>
        <taxon>Catarrhini</taxon>
        <taxon>Hominidae</taxon>
        <taxon>Homo</taxon>
    </lineage>
</organism>
<feature type="chain" id="PRO_0000341586" description="Trafficking protein particle complex subunit 9">
    <location>
        <begin position="1"/>
        <end position="1148"/>
    </location>
</feature>
<feature type="modified residue" description="Phosphoserine" evidence="9">
    <location>
        <position position="566"/>
    </location>
</feature>
<feature type="modified residue" description="Phosphoserine" evidence="9">
    <location>
        <position position="953"/>
    </location>
</feature>
<feature type="splice variant" id="VSP_034349" description="In isoform 2." evidence="6">
    <original>M</original>
    <variation>MVPAGDQDRAPHRGKPAQAGARTSRASRALRSWRRSQAARATVTHPRGGHDRGSHGGYREGHRGCRRDPQWASAGPPPLSFTEEVKFELRALKDWDFKM</variation>
    <location>
        <position position="1"/>
    </location>
</feature>
<feature type="splice variant" id="VSP_034350" description="In isoform 3." evidence="7">
    <location>
        <begin position="286"/>
        <end position="294"/>
    </location>
</feature>
<feature type="sequence conflict" description="In Ref. 4; CAH56384." evidence="8" ref="4">
    <location>
        <position position="505"/>
    </location>
</feature>
<feature type="sequence conflict" description="In Ref. 2; BAC87600." evidence="8" ref="2">
    <original>I</original>
    <variation>V</variation>
    <location>
        <position position="539"/>
    </location>
</feature>
<feature type="sequence conflict" description="In Ref. 2; BAB55299." evidence="8" ref="2">
    <original>V</original>
    <variation>E</variation>
    <location>
        <position position="669"/>
    </location>
</feature>
<proteinExistence type="evidence at protein level"/>
<evidence type="ECO:0000250" key="1"/>
<evidence type="ECO:0000269" key="2">
    <source>
    </source>
</evidence>
<evidence type="ECO:0000269" key="3">
    <source>
    </source>
</evidence>
<evidence type="ECO:0000269" key="4">
    <source>
    </source>
</evidence>
<evidence type="ECO:0000269" key="5">
    <source>
    </source>
</evidence>
<evidence type="ECO:0000303" key="6">
    <source>
    </source>
</evidence>
<evidence type="ECO:0000303" key="7">
    <source>
    </source>
</evidence>
<evidence type="ECO:0000305" key="8"/>
<evidence type="ECO:0007744" key="9">
    <source>
    </source>
</evidence>